<feature type="chain" id="PRO_0000149249" description="Beta-galactoside alpha-2,6-sialyltransferase 1">
    <location>
        <begin position="1"/>
        <end position="406"/>
    </location>
</feature>
<feature type="topological domain" description="Cytoplasmic">
    <location>
        <begin position="1"/>
        <end position="9"/>
    </location>
</feature>
<feature type="transmembrane region" description="Helical; Signal-anchor for type II membrane protein" evidence="2">
    <location>
        <begin position="10"/>
        <end position="26"/>
    </location>
</feature>
<feature type="topological domain" description="Lumenal" evidence="2">
    <location>
        <begin position="27"/>
        <end position="406"/>
    </location>
</feature>
<feature type="binding site" evidence="9 13">
    <location>
        <position position="189"/>
    </location>
    <ligand>
        <name>substrate</name>
    </ligand>
</feature>
<feature type="binding site" evidence="9">
    <location>
        <position position="212"/>
    </location>
    <ligand>
        <name>substrate</name>
    </ligand>
</feature>
<feature type="binding site" evidence="9">
    <location>
        <position position="233"/>
    </location>
    <ligand>
        <name>substrate</name>
    </ligand>
</feature>
<feature type="binding site" evidence="9 13">
    <location>
        <begin position="322"/>
        <end position="324"/>
    </location>
    <ligand>
        <name>substrate</name>
    </ligand>
</feature>
<feature type="binding site" evidence="9 13">
    <location>
        <position position="353"/>
    </location>
    <ligand>
        <name>substrate</name>
    </ligand>
</feature>
<feature type="binding site" evidence="9 13">
    <location>
        <position position="354"/>
    </location>
    <ligand>
        <name>substrate</name>
    </ligand>
</feature>
<feature type="binding site" evidence="9 13 14">
    <location>
        <position position="365"/>
    </location>
    <ligand>
        <name>substrate</name>
    </ligand>
</feature>
<feature type="binding site" evidence="12">
    <location>
        <position position="369"/>
    </location>
    <ligand>
        <name>substrate</name>
    </ligand>
</feature>
<feature type="binding site" evidence="9">
    <location>
        <position position="370"/>
    </location>
    <ligand>
        <name>substrate</name>
    </ligand>
</feature>
<feature type="binding site" evidence="9 14">
    <location>
        <position position="376"/>
    </location>
    <ligand>
        <name>substrate</name>
    </ligand>
</feature>
<feature type="modified residue" description="Phosphotyrosine" evidence="15">
    <location>
        <position position="369"/>
    </location>
</feature>
<feature type="glycosylation site" description="N-linked (GlcNAc...) asparagine" evidence="5 9 13">
    <location>
        <position position="149"/>
    </location>
</feature>
<feature type="glycosylation site" description="N-linked (GlcNAc...) asparagine" evidence="5">
    <location>
        <position position="161"/>
    </location>
</feature>
<feature type="disulfide bond" evidence="9 14">
    <location>
        <begin position="142"/>
        <end position="406"/>
    </location>
</feature>
<feature type="disulfide bond" evidence="9 13 14">
    <location>
        <begin position="184"/>
        <end position="335"/>
    </location>
</feature>
<feature type="disulfide bond" evidence="9 13 14">
    <location>
        <begin position="353"/>
        <end position="364"/>
    </location>
</feature>
<feature type="splice variant" id="VSP_056076" description="In isoform 2." evidence="11">
    <location>
        <begin position="1"/>
        <end position="231"/>
    </location>
</feature>
<feature type="mutagenesis site" description="No effect on dimerization and on location at the Golgi stack." evidence="6">
    <original>C</original>
    <variation>G</variation>
    <location>
        <position position="24"/>
    </location>
</feature>
<feature type="sequence conflict" description="In Ref. 2; CAA38246." evidence="12" ref="2">
    <original>K</original>
    <variation>L</variation>
    <location>
        <position position="27"/>
    </location>
</feature>
<feature type="sequence conflict" description="In Ref. 2; CAA38246." evidence="12" ref="2">
    <original>HR</original>
    <variation>T</variation>
    <location>
        <begin position="72"/>
        <end position="73"/>
    </location>
</feature>
<feature type="sequence conflict" description="In Ref. 2; CAA38246." evidence="12" ref="2">
    <original>L</original>
    <variation>P</variation>
    <location>
        <position position="144"/>
    </location>
</feature>
<feature type="helix" evidence="16">
    <location>
        <begin position="102"/>
        <end position="104"/>
    </location>
</feature>
<feature type="helix" evidence="16">
    <location>
        <begin position="107"/>
        <end position="118"/>
    </location>
</feature>
<feature type="helix" evidence="17">
    <location>
        <begin position="137"/>
        <end position="147"/>
    </location>
</feature>
<feature type="turn" evidence="17">
    <location>
        <begin position="158"/>
        <end position="161"/>
    </location>
</feature>
<feature type="helix" evidence="17">
    <location>
        <begin position="163"/>
        <end position="165"/>
    </location>
</feature>
<feature type="turn" evidence="17">
    <location>
        <begin position="166"/>
        <end position="168"/>
    </location>
</feature>
<feature type="helix" evidence="17">
    <location>
        <begin position="174"/>
        <end position="177"/>
    </location>
</feature>
<feature type="strand" evidence="17">
    <location>
        <begin position="181"/>
        <end position="187"/>
    </location>
</feature>
<feature type="helix" evidence="17">
    <location>
        <begin position="191"/>
        <end position="193"/>
    </location>
</feature>
<feature type="helix" evidence="17">
    <location>
        <begin position="199"/>
        <end position="203"/>
    </location>
</feature>
<feature type="strand" evidence="17">
    <location>
        <begin position="204"/>
        <end position="211"/>
    </location>
</feature>
<feature type="turn" evidence="17">
    <location>
        <begin position="217"/>
        <end position="219"/>
    </location>
</feature>
<feature type="helix" evidence="17">
    <location>
        <begin position="220"/>
        <end position="223"/>
    </location>
</feature>
<feature type="strand" evidence="17">
    <location>
        <begin position="228"/>
        <end position="233"/>
    </location>
</feature>
<feature type="helix" evidence="17">
    <location>
        <begin position="234"/>
        <end position="239"/>
    </location>
</feature>
<feature type="helix" evidence="17">
    <location>
        <begin position="241"/>
        <end position="244"/>
    </location>
</feature>
<feature type="helix" evidence="17">
    <location>
        <begin position="247"/>
        <end position="250"/>
    </location>
</feature>
<feature type="strand" evidence="17">
    <location>
        <begin position="251"/>
        <end position="257"/>
    </location>
</feature>
<feature type="helix" evidence="17">
    <location>
        <begin position="266"/>
        <end position="271"/>
    </location>
</feature>
<feature type="helix" evidence="17">
    <location>
        <begin position="278"/>
        <end position="287"/>
    </location>
</feature>
<feature type="strand" evidence="17">
    <location>
        <begin position="293"/>
        <end position="296"/>
    </location>
</feature>
<feature type="helix" evidence="17">
    <location>
        <begin position="299"/>
        <end position="311"/>
    </location>
</feature>
<feature type="turn" evidence="17">
    <location>
        <begin position="313"/>
        <end position="315"/>
    </location>
</feature>
<feature type="helix" evidence="17">
    <location>
        <begin position="323"/>
        <end position="334"/>
    </location>
</feature>
<feature type="strand" evidence="17">
    <location>
        <begin position="335"/>
        <end position="344"/>
    </location>
</feature>
<feature type="strand" evidence="16">
    <location>
        <begin position="354"/>
        <end position="356"/>
    </location>
</feature>
<feature type="helix" evidence="16">
    <location>
        <begin position="363"/>
        <end position="366"/>
    </location>
</feature>
<feature type="strand" evidence="16">
    <location>
        <begin position="368"/>
        <end position="370"/>
    </location>
</feature>
<feature type="helix" evidence="17">
    <location>
        <begin position="373"/>
        <end position="382"/>
    </location>
</feature>
<feature type="helix" evidence="17">
    <location>
        <begin position="387"/>
        <end position="393"/>
    </location>
</feature>
<feature type="strand" evidence="17">
    <location>
        <begin position="395"/>
        <end position="399"/>
    </location>
</feature>
<feature type="helix" evidence="17">
    <location>
        <begin position="401"/>
        <end position="403"/>
    </location>
</feature>
<keyword id="KW-0002">3D-structure</keyword>
<keyword id="KW-0025">Alternative splicing</keyword>
<keyword id="KW-1015">Disulfide bond</keyword>
<keyword id="KW-0325">Glycoprotein</keyword>
<keyword id="KW-0328">Glycosyltransferase</keyword>
<keyword id="KW-0333">Golgi apparatus</keyword>
<keyword id="KW-0472">Membrane</keyword>
<keyword id="KW-0597">Phosphoprotein</keyword>
<keyword id="KW-1267">Proteomics identification</keyword>
<keyword id="KW-1185">Reference proteome</keyword>
<keyword id="KW-0964">Secreted</keyword>
<keyword id="KW-0735">Signal-anchor</keyword>
<keyword id="KW-0808">Transferase</keyword>
<keyword id="KW-0812">Transmembrane</keyword>
<keyword id="KW-1133">Transmembrane helix</keyword>
<accession>P15907</accession>
<accession>A8KA14</accession>
<accession>B2R513</accession>
<accession>D3DNV3</accession>
<reference key="1">
    <citation type="journal article" date="1990" name="Nucleic Acids Res.">
        <title>Complete cDNA sequence encoding human beta-galactoside alpha-2,6-sialyltransferase.</title>
        <authorList>
            <person name="Grundmann U.G."/>
            <person name="Nerlich C."/>
            <person name="Rein T."/>
            <person name="Zettlmeissl G."/>
        </authorList>
    </citation>
    <scope>NUCLEOTIDE SEQUENCE [MRNA] (ISOFORM 1)</scope>
    <source>
        <tissue>Placenta</tissue>
    </source>
</reference>
<reference key="2">
    <citation type="journal article" date="1990" name="J. Exp. Med.">
        <title>The B cell antigen CD75 is a cell surface sialyltransferase.</title>
        <authorList>
            <person name="Stamenkovic I."/>
            <person name="Asheim H.C."/>
            <person name="Deggerdal A."/>
            <person name="Blomhoff H.K."/>
            <person name="Smeland E.B."/>
            <person name="Funderud S."/>
        </authorList>
    </citation>
    <scope>NUCLEOTIDE SEQUENCE [MRNA] (ISOFORM 1)</scope>
    <scope>CAUTION</scope>
</reference>
<reference key="3">
    <citation type="journal article" date="1992" name="J. Cell Biol.">
        <title>The HB-6, CDw75, and CD76 differentiation antigens are unique cell-surface carbohydrate determinants generated by the beta-galactoside alpha 2,6-sialyltransferase.</title>
        <authorList>
            <person name="Bast B.J.E.G."/>
            <person name="Zhou L.J."/>
            <person name="Freeman G.J."/>
            <person name="Colley K.J."/>
            <person name="Ernst T.J."/>
            <person name="Munro J.M."/>
            <person name="Tedder T.F."/>
        </authorList>
    </citation>
    <scope>NUCLEOTIDE SEQUENCE [MRNA] (ISOFORM 1)</scope>
    <scope>CAUTION</scope>
    <scope>FUNCTION</scope>
    <scope>SUBCELLULAR LOCATION</scope>
    <source>
        <tissue>Spleen</tissue>
    </source>
</reference>
<reference key="4">
    <citation type="journal article" date="2004" name="Nat. Genet.">
        <title>Complete sequencing and characterization of 21,243 full-length human cDNAs.</title>
        <authorList>
            <person name="Ota T."/>
            <person name="Suzuki Y."/>
            <person name="Nishikawa T."/>
            <person name="Otsuki T."/>
            <person name="Sugiyama T."/>
            <person name="Irie R."/>
            <person name="Wakamatsu A."/>
            <person name="Hayashi K."/>
            <person name="Sato H."/>
            <person name="Nagai K."/>
            <person name="Kimura K."/>
            <person name="Makita H."/>
            <person name="Sekine M."/>
            <person name="Obayashi M."/>
            <person name="Nishi T."/>
            <person name="Shibahara T."/>
            <person name="Tanaka T."/>
            <person name="Ishii S."/>
            <person name="Yamamoto J."/>
            <person name="Saito K."/>
            <person name="Kawai Y."/>
            <person name="Isono Y."/>
            <person name="Nakamura Y."/>
            <person name="Nagahari K."/>
            <person name="Murakami K."/>
            <person name="Yasuda T."/>
            <person name="Iwayanagi T."/>
            <person name="Wagatsuma M."/>
            <person name="Shiratori A."/>
            <person name="Sudo H."/>
            <person name="Hosoiri T."/>
            <person name="Kaku Y."/>
            <person name="Kodaira H."/>
            <person name="Kondo H."/>
            <person name="Sugawara M."/>
            <person name="Takahashi M."/>
            <person name="Kanda K."/>
            <person name="Yokoi T."/>
            <person name="Furuya T."/>
            <person name="Kikkawa E."/>
            <person name="Omura Y."/>
            <person name="Abe K."/>
            <person name="Kamihara K."/>
            <person name="Katsuta N."/>
            <person name="Sato K."/>
            <person name="Tanikawa M."/>
            <person name="Yamazaki M."/>
            <person name="Ninomiya K."/>
            <person name="Ishibashi T."/>
            <person name="Yamashita H."/>
            <person name="Murakawa K."/>
            <person name="Fujimori K."/>
            <person name="Tanai H."/>
            <person name="Kimata M."/>
            <person name="Watanabe M."/>
            <person name="Hiraoka S."/>
            <person name="Chiba Y."/>
            <person name="Ishida S."/>
            <person name="Ono Y."/>
            <person name="Takiguchi S."/>
            <person name="Watanabe S."/>
            <person name="Yosida M."/>
            <person name="Hotuta T."/>
            <person name="Kusano J."/>
            <person name="Kanehori K."/>
            <person name="Takahashi-Fujii A."/>
            <person name="Hara H."/>
            <person name="Tanase T.-O."/>
            <person name="Nomura Y."/>
            <person name="Togiya S."/>
            <person name="Komai F."/>
            <person name="Hara R."/>
            <person name="Takeuchi K."/>
            <person name="Arita M."/>
            <person name="Imose N."/>
            <person name="Musashino K."/>
            <person name="Yuuki H."/>
            <person name="Oshima A."/>
            <person name="Sasaki N."/>
            <person name="Aotsuka S."/>
            <person name="Yoshikawa Y."/>
            <person name="Matsunawa H."/>
            <person name="Ichihara T."/>
            <person name="Shiohata N."/>
            <person name="Sano S."/>
            <person name="Moriya S."/>
            <person name="Momiyama H."/>
            <person name="Satoh N."/>
            <person name="Takami S."/>
            <person name="Terashima Y."/>
            <person name="Suzuki O."/>
            <person name="Nakagawa S."/>
            <person name="Senoh A."/>
            <person name="Mizoguchi H."/>
            <person name="Goto Y."/>
            <person name="Shimizu F."/>
            <person name="Wakebe H."/>
            <person name="Hishigaki H."/>
            <person name="Watanabe T."/>
            <person name="Sugiyama A."/>
            <person name="Takemoto M."/>
            <person name="Kawakami B."/>
            <person name="Yamazaki M."/>
            <person name="Watanabe K."/>
            <person name="Kumagai A."/>
            <person name="Itakura S."/>
            <person name="Fukuzumi Y."/>
            <person name="Fujimori Y."/>
            <person name="Komiyama M."/>
            <person name="Tashiro H."/>
            <person name="Tanigami A."/>
            <person name="Fujiwara T."/>
            <person name="Ono T."/>
            <person name="Yamada K."/>
            <person name="Fujii Y."/>
            <person name="Ozaki K."/>
            <person name="Hirao M."/>
            <person name="Ohmori Y."/>
            <person name="Kawabata A."/>
            <person name="Hikiji T."/>
            <person name="Kobatake N."/>
            <person name="Inagaki H."/>
            <person name="Ikema Y."/>
            <person name="Okamoto S."/>
            <person name="Okitani R."/>
            <person name="Kawakami T."/>
            <person name="Noguchi S."/>
            <person name="Itoh T."/>
            <person name="Shigeta K."/>
            <person name="Senba T."/>
            <person name="Matsumura K."/>
            <person name="Nakajima Y."/>
            <person name="Mizuno T."/>
            <person name="Morinaga M."/>
            <person name="Sasaki M."/>
            <person name="Togashi T."/>
            <person name="Oyama M."/>
            <person name="Hata H."/>
            <person name="Watanabe M."/>
            <person name="Komatsu T."/>
            <person name="Mizushima-Sugano J."/>
            <person name="Satoh T."/>
            <person name="Shirai Y."/>
            <person name="Takahashi Y."/>
            <person name="Nakagawa K."/>
            <person name="Okumura K."/>
            <person name="Nagase T."/>
            <person name="Nomura N."/>
            <person name="Kikuchi H."/>
            <person name="Masuho Y."/>
            <person name="Yamashita R."/>
            <person name="Nakai K."/>
            <person name="Yada T."/>
            <person name="Nakamura Y."/>
            <person name="Ohara O."/>
            <person name="Isogai T."/>
            <person name="Sugano S."/>
        </authorList>
    </citation>
    <scope>NUCLEOTIDE SEQUENCE [LARGE SCALE MRNA] (ISOFORMS 1 AND 2)</scope>
    <source>
        <tissue>Thymus</tissue>
        <tissue>Trachea</tissue>
    </source>
</reference>
<reference key="5">
    <citation type="journal article" date="2006" name="Nature">
        <title>The DNA sequence, annotation and analysis of human chromosome 3.</title>
        <authorList>
            <person name="Muzny D.M."/>
            <person name="Scherer S.E."/>
            <person name="Kaul R."/>
            <person name="Wang J."/>
            <person name="Yu J."/>
            <person name="Sudbrak R."/>
            <person name="Buhay C.J."/>
            <person name="Chen R."/>
            <person name="Cree A."/>
            <person name="Ding Y."/>
            <person name="Dugan-Rocha S."/>
            <person name="Gill R."/>
            <person name="Gunaratne P."/>
            <person name="Harris R.A."/>
            <person name="Hawes A.C."/>
            <person name="Hernandez J."/>
            <person name="Hodgson A.V."/>
            <person name="Hume J."/>
            <person name="Jackson A."/>
            <person name="Khan Z.M."/>
            <person name="Kovar-Smith C."/>
            <person name="Lewis L.R."/>
            <person name="Lozado R.J."/>
            <person name="Metzker M.L."/>
            <person name="Milosavljevic A."/>
            <person name="Miner G.R."/>
            <person name="Morgan M.B."/>
            <person name="Nazareth L.V."/>
            <person name="Scott G."/>
            <person name="Sodergren E."/>
            <person name="Song X.-Z."/>
            <person name="Steffen D."/>
            <person name="Wei S."/>
            <person name="Wheeler D.A."/>
            <person name="Wright M.W."/>
            <person name="Worley K.C."/>
            <person name="Yuan Y."/>
            <person name="Zhang Z."/>
            <person name="Adams C.Q."/>
            <person name="Ansari-Lari M.A."/>
            <person name="Ayele M."/>
            <person name="Brown M.J."/>
            <person name="Chen G."/>
            <person name="Chen Z."/>
            <person name="Clendenning J."/>
            <person name="Clerc-Blankenburg K.P."/>
            <person name="Chen R."/>
            <person name="Chen Z."/>
            <person name="Davis C."/>
            <person name="Delgado O."/>
            <person name="Dinh H.H."/>
            <person name="Dong W."/>
            <person name="Draper H."/>
            <person name="Ernst S."/>
            <person name="Fu G."/>
            <person name="Gonzalez-Garay M.L."/>
            <person name="Garcia D.K."/>
            <person name="Gillett W."/>
            <person name="Gu J."/>
            <person name="Hao B."/>
            <person name="Haugen E."/>
            <person name="Havlak P."/>
            <person name="He X."/>
            <person name="Hennig S."/>
            <person name="Hu S."/>
            <person name="Huang W."/>
            <person name="Jackson L.R."/>
            <person name="Jacob L.S."/>
            <person name="Kelly S.H."/>
            <person name="Kube M."/>
            <person name="Levy R."/>
            <person name="Li Z."/>
            <person name="Liu B."/>
            <person name="Liu J."/>
            <person name="Liu W."/>
            <person name="Lu J."/>
            <person name="Maheshwari M."/>
            <person name="Nguyen B.-V."/>
            <person name="Okwuonu G.O."/>
            <person name="Palmeiri A."/>
            <person name="Pasternak S."/>
            <person name="Perez L.M."/>
            <person name="Phelps K.A."/>
            <person name="Plopper F.J."/>
            <person name="Qiang B."/>
            <person name="Raymond C."/>
            <person name="Rodriguez R."/>
            <person name="Saenphimmachak C."/>
            <person name="Santibanez J."/>
            <person name="Shen H."/>
            <person name="Shen Y."/>
            <person name="Subramanian S."/>
            <person name="Tabor P.E."/>
            <person name="Verduzco D."/>
            <person name="Waldron L."/>
            <person name="Wang J."/>
            <person name="Wang J."/>
            <person name="Wang Q."/>
            <person name="Williams G.A."/>
            <person name="Wong G.K.-S."/>
            <person name="Yao Z."/>
            <person name="Zhang J."/>
            <person name="Zhang X."/>
            <person name="Zhao G."/>
            <person name="Zhou J."/>
            <person name="Zhou Y."/>
            <person name="Nelson D."/>
            <person name="Lehrach H."/>
            <person name="Reinhardt R."/>
            <person name="Naylor S.L."/>
            <person name="Yang H."/>
            <person name="Olson M."/>
            <person name="Weinstock G."/>
            <person name="Gibbs R.A."/>
        </authorList>
    </citation>
    <scope>NUCLEOTIDE SEQUENCE [LARGE SCALE GENOMIC DNA]</scope>
</reference>
<reference key="6">
    <citation type="submission" date="2005-09" db="EMBL/GenBank/DDBJ databases">
        <authorList>
            <person name="Mural R.J."/>
            <person name="Istrail S."/>
            <person name="Sutton G.G."/>
            <person name="Florea L."/>
            <person name="Halpern A.L."/>
            <person name="Mobarry C.M."/>
            <person name="Lippert R."/>
            <person name="Walenz B."/>
            <person name="Shatkay H."/>
            <person name="Dew I."/>
            <person name="Miller J.R."/>
            <person name="Flanigan M.J."/>
            <person name="Edwards N.J."/>
            <person name="Bolanos R."/>
            <person name="Fasulo D."/>
            <person name="Halldorsson B.V."/>
            <person name="Hannenhalli S."/>
            <person name="Turner R."/>
            <person name="Yooseph S."/>
            <person name="Lu F."/>
            <person name="Nusskern D.R."/>
            <person name="Shue B.C."/>
            <person name="Zheng X.H."/>
            <person name="Zhong F."/>
            <person name="Delcher A.L."/>
            <person name="Huson D.H."/>
            <person name="Kravitz S.A."/>
            <person name="Mouchard L."/>
            <person name="Reinert K."/>
            <person name="Remington K.A."/>
            <person name="Clark A.G."/>
            <person name="Waterman M.S."/>
            <person name="Eichler E.E."/>
            <person name="Adams M.D."/>
            <person name="Hunkapiller M.W."/>
            <person name="Myers E.W."/>
            <person name="Venter J.C."/>
        </authorList>
    </citation>
    <scope>NUCLEOTIDE SEQUENCE [LARGE SCALE GENOMIC DNA]</scope>
</reference>
<reference key="7">
    <citation type="journal article" date="2004" name="Genome Res.">
        <title>The status, quality, and expansion of the NIH full-length cDNA project: the Mammalian Gene Collection (MGC).</title>
        <authorList>
            <consortium name="The MGC Project Team"/>
        </authorList>
    </citation>
    <scope>NUCLEOTIDE SEQUENCE [LARGE SCALE MRNA] (ISOFORM 1)</scope>
    <source>
        <tissue>Lymph</tissue>
        <tissue>Skin</tissue>
    </source>
</reference>
<reference key="8">
    <citation type="journal article" date="1989" name="Biochem. Biophys. Res. Commun.">
        <title>Isolation and characterization of a partial cDNA for a human sialyltransferase.</title>
        <authorList>
            <person name="Lance P."/>
            <person name="Lau K.M."/>
            <person name="Lau J.T.Y."/>
        </authorList>
    </citation>
    <scope>NUCLEOTIDE SEQUENCE [MRNA] OF 74-406 (ISOFORM 1)</scope>
</reference>
<reference key="9">
    <citation type="journal article" date="1992" name="Cell">
        <title>The B lymphocyte surface antigen CD75 is not an alpha-2,6-sialyltransferase but is a carbohydrate antigen, the production of which requires the enzyme.</title>
        <authorList>
            <person name="Munro S."/>
            <person name="Bast B.J."/>
            <person name="Colley K.J."/>
            <person name="Tedder T.F."/>
        </authorList>
    </citation>
    <scope>CAUTION</scope>
</reference>
<reference key="10">
    <citation type="journal article" date="2009" name="J. Proteome Res.">
        <title>Glycoproteomics analysis of human liver tissue by combination of multiple enzyme digestion and hydrazide chemistry.</title>
        <authorList>
            <person name="Chen R."/>
            <person name="Jiang X."/>
            <person name="Sun D."/>
            <person name="Han G."/>
            <person name="Wang F."/>
            <person name="Ye M."/>
            <person name="Wang L."/>
            <person name="Zou H."/>
        </authorList>
    </citation>
    <scope>GLYCOSYLATION [LARGE SCALE ANALYSIS] AT ASN-149 AND ASN-161</scope>
    <source>
        <tissue>Liver</tissue>
    </source>
</reference>
<reference key="11">
    <citation type="journal article" date="2009" name="Sci. Signal.">
        <title>Quantitative phosphoproteomic analysis of T cell receptor signaling reveals system-wide modulation of protein-protein interactions.</title>
        <authorList>
            <person name="Mayya V."/>
            <person name="Lundgren D.H."/>
            <person name="Hwang S.-I."/>
            <person name="Rezaul K."/>
            <person name="Wu L."/>
            <person name="Eng J.K."/>
            <person name="Rodionov V."/>
            <person name="Han D.K."/>
        </authorList>
    </citation>
    <scope>PHOSPHORYLATION [LARGE SCALE ANALYSIS] AT TYR-369</scope>
    <scope>IDENTIFICATION BY MASS SPECTROMETRY [LARGE SCALE ANALYSIS]</scope>
    <source>
        <tissue>Leukemic T-cell</tissue>
    </source>
</reference>
<reference key="12">
    <citation type="journal article" date="2010" name="J. Biol. Chem.">
        <title>Golgi N-glycosyltransferases form both homo- and heterodimeric enzyme complexes in live cells.</title>
        <authorList>
            <person name="Hassinen A."/>
            <person name="Rivinoja A."/>
            <person name="Kauppila A."/>
            <person name="Kellokumpu S."/>
        </authorList>
    </citation>
    <scope>SUBCELLULAR LOCATION</scope>
    <scope>SUBUNIT</scope>
    <scope>MUTAGENESIS OF CYS-24</scope>
</reference>
<reference key="13">
    <citation type="journal article" date="2011" name="Glycobiology">
        <title>Universal phosphatase-coupled glycosyltransferase assay.</title>
        <authorList>
            <person name="Wu Z.L."/>
            <person name="Ethen C.M."/>
            <person name="Prather B."/>
            <person name="Machacek M."/>
            <person name="Jiang W."/>
        </authorList>
    </citation>
    <scope>FUNCTION</scope>
    <scope>CATALYTIC ACTIVITY</scope>
    <scope>BIOPHYSICOCHEMICAL PROPERTIES</scope>
</reference>
<reference key="14">
    <citation type="journal article" date="2022" name="Glycobiology">
        <title>The incorrect use of CD75 as a synonym for ST6GAL1 has fostered the expansion of commercial 'ST6GAL1' antibodies that do not recognize ST6GAL1.</title>
        <authorList>
            <person name="Haldar B."/>
            <person name="Hwang J."/>
            <person name="Narimatsu Y."/>
            <person name="Clausen H."/>
            <person name="Bellis S.L."/>
        </authorList>
    </citation>
    <scope>CAUTION</scope>
</reference>
<reference key="15">
    <citation type="journal article" date="2013" name="Acta Crystallogr. D">
        <title>The structure of human alpha-2,6-sialyltransferase reveals the binding mode of complex glycans.</title>
        <authorList>
            <person name="Kuhn B."/>
            <person name="Benz J."/>
            <person name="Greif M."/>
            <person name="Engel A.M."/>
            <person name="Sobek H."/>
            <person name="Rudolph M.G."/>
        </authorList>
    </citation>
    <scope>X-RAY CRYSTALLOGRAPHY (2.09 ANGSTROMS) OF 89-406 IN COMPLEXES WITH CMP; CYTIDINE AND PHOSPHATE</scope>
    <scope>FUNCTION</scope>
    <scope>CATALYTIC ACTIVITY</scope>
    <scope>ACTIVITY REGULATION</scope>
    <scope>IDENTIFICATION BY MASS SPECTROMETRY</scope>
    <scope>GLYCOSYLATION AT ASN-149</scope>
    <scope>DISULFIDE BONDS</scope>
</reference>
<dbReference type="EC" id="2.4.3.1" evidence="7 9"/>
<dbReference type="EMBL" id="X17247">
    <property type="protein sequence ID" value="CAA35111.1"/>
    <property type="molecule type" value="mRNA"/>
</dbReference>
<dbReference type="EMBL" id="X54363">
    <property type="protein sequence ID" value="CAA38246.1"/>
    <property type="molecule type" value="mRNA"/>
</dbReference>
<dbReference type="EMBL" id="X62822">
    <property type="protein sequence ID" value="CAA44634.1"/>
    <property type="molecule type" value="mRNA"/>
</dbReference>
<dbReference type="EMBL" id="AK292879">
    <property type="protein sequence ID" value="BAF85568.1"/>
    <property type="molecule type" value="mRNA"/>
</dbReference>
<dbReference type="EMBL" id="AK312023">
    <property type="protein sequence ID" value="BAG34960.1"/>
    <property type="molecule type" value="mRNA"/>
</dbReference>
<dbReference type="EMBL" id="AC007488">
    <property type="status" value="NOT_ANNOTATED_CDS"/>
    <property type="molecule type" value="Genomic_DNA"/>
</dbReference>
<dbReference type="EMBL" id="AC007690">
    <property type="status" value="NOT_ANNOTATED_CDS"/>
    <property type="molecule type" value="Genomic_DNA"/>
</dbReference>
<dbReference type="EMBL" id="CH471052">
    <property type="protein sequence ID" value="EAW78160.1"/>
    <property type="molecule type" value="Genomic_DNA"/>
</dbReference>
<dbReference type="EMBL" id="CH471052">
    <property type="protein sequence ID" value="EAW78161.1"/>
    <property type="molecule type" value="Genomic_DNA"/>
</dbReference>
<dbReference type="EMBL" id="CH471052">
    <property type="protein sequence ID" value="EAW78162.1"/>
    <property type="molecule type" value="Genomic_DNA"/>
</dbReference>
<dbReference type="EMBL" id="CH471052">
    <property type="protein sequence ID" value="EAW78164.1"/>
    <property type="molecule type" value="Genomic_DNA"/>
</dbReference>
<dbReference type="EMBL" id="BC031476">
    <property type="protein sequence ID" value="AAH31476.1"/>
    <property type="molecule type" value="mRNA"/>
</dbReference>
<dbReference type="EMBL" id="BC040009">
    <property type="protein sequence ID" value="AAH40009.1"/>
    <property type="molecule type" value="mRNA"/>
</dbReference>
<dbReference type="CCDS" id="CCDS3285.1">
    <molecule id="P15907-1"/>
</dbReference>
<dbReference type="CCDS" id="CCDS46973.1">
    <molecule id="P15907-2"/>
</dbReference>
<dbReference type="PIR" id="A41734">
    <property type="entry name" value="A41734"/>
</dbReference>
<dbReference type="RefSeq" id="NP_001340845.1">
    <molecule id="P15907-1"/>
    <property type="nucleotide sequence ID" value="NM_001353916.2"/>
</dbReference>
<dbReference type="RefSeq" id="NP_003023.1">
    <molecule id="P15907-1"/>
    <property type="nucleotide sequence ID" value="NM_003032.3"/>
</dbReference>
<dbReference type="RefSeq" id="NP_775323.1">
    <molecule id="P15907-1"/>
    <property type="nucleotide sequence ID" value="NM_173216.2"/>
</dbReference>
<dbReference type="RefSeq" id="NP_775324.1">
    <molecule id="P15907-2"/>
    <property type="nucleotide sequence ID" value="NM_173217.2"/>
</dbReference>
<dbReference type="RefSeq" id="XP_005247776.1">
    <property type="nucleotide sequence ID" value="XM_005247719.1"/>
</dbReference>
<dbReference type="RefSeq" id="XP_005247777.1">
    <property type="nucleotide sequence ID" value="XM_005247720.1"/>
</dbReference>
<dbReference type="RefSeq" id="XP_006713797.1">
    <property type="nucleotide sequence ID" value="XM_006713734.1"/>
</dbReference>
<dbReference type="RefSeq" id="XP_011511387.1">
    <property type="nucleotide sequence ID" value="XM_011513085.1"/>
</dbReference>
<dbReference type="RefSeq" id="XP_011511388.1">
    <property type="nucleotide sequence ID" value="XM_011513086.1"/>
</dbReference>
<dbReference type="RefSeq" id="XP_016862554.1">
    <property type="nucleotide sequence ID" value="XM_017007065.1"/>
</dbReference>
<dbReference type="RefSeq" id="XP_016862555.1">
    <property type="nucleotide sequence ID" value="XM_017007066.1"/>
</dbReference>
<dbReference type="RefSeq" id="XP_016862556.1">
    <property type="nucleotide sequence ID" value="XM_017007067.1"/>
</dbReference>
<dbReference type="RefSeq" id="XP_016862557.1">
    <property type="nucleotide sequence ID" value="XM_017007068.1"/>
</dbReference>
<dbReference type="PDB" id="4JS1">
    <property type="method" value="X-ray"/>
    <property type="resolution" value="2.09 A"/>
    <property type="chains" value="A=89-406"/>
</dbReference>
<dbReference type="PDB" id="4JS2">
    <property type="method" value="X-ray"/>
    <property type="resolution" value="2.30 A"/>
    <property type="chains" value="A=89-406"/>
</dbReference>
<dbReference type="PDB" id="6QVS">
    <property type="method" value="X-ray"/>
    <property type="resolution" value="1.60 A"/>
    <property type="chains" value="A/B=132-406"/>
</dbReference>
<dbReference type="PDB" id="6QVT">
    <property type="method" value="X-ray"/>
    <property type="resolution" value="1.70 A"/>
    <property type="chains" value="A/B=132-406"/>
</dbReference>
<dbReference type="PDBsum" id="4JS1"/>
<dbReference type="PDBsum" id="4JS2"/>
<dbReference type="PDBsum" id="6QVS"/>
<dbReference type="PDBsum" id="6QVT"/>
<dbReference type="SMR" id="P15907"/>
<dbReference type="BioGRID" id="112374">
    <property type="interactions" value="25"/>
</dbReference>
<dbReference type="FunCoup" id="P15907">
    <property type="interactions" value="585"/>
</dbReference>
<dbReference type="IntAct" id="P15907">
    <property type="interactions" value="24"/>
</dbReference>
<dbReference type="STRING" id="9606.ENSP00000169298"/>
<dbReference type="BindingDB" id="P15907"/>
<dbReference type="ChEMBL" id="CHEMBL3596075"/>
<dbReference type="CAZy" id="GT29">
    <property type="family name" value="Glycosyltransferase Family 29"/>
</dbReference>
<dbReference type="GlyCosmos" id="P15907">
    <property type="glycosylation" value="2 sites, No reported glycans"/>
</dbReference>
<dbReference type="GlyGen" id="P15907">
    <property type="glycosylation" value="8 sites, 1 O-linked glycan (2 sites)"/>
</dbReference>
<dbReference type="iPTMnet" id="P15907"/>
<dbReference type="PhosphoSitePlus" id="P15907"/>
<dbReference type="BioMuta" id="ST6GAL1"/>
<dbReference type="DMDM" id="115445"/>
<dbReference type="jPOST" id="P15907"/>
<dbReference type="MassIVE" id="P15907"/>
<dbReference type="PaxDb" id="9606-ENSP00000169298"/>
<dbReference type="PeptideAtlas" id="P15907"/>
<dbReference type="ProteomicsDB" id="3411"/>
<dbReference type="ProteomicsDB" id="53240">
    <molecule id="P15907-1"/>
</dbReference>
<dbReference type="Pumba" id="P15907"/>
<dbReference type="Antibodypedia" id="4243">
    <property type="antibodies" value="585 antibodies from 38 providers"/>
</dbReference>
<dbReference type="DNASU" id="6480"/>
<dbReference type="Ensembl" id="ENST00000169298.8">
    <molecule id="P15907-1"/>
    <property type="protein sequence ID" value="ENSP00000169298.3"/>
    <property type="gene ID" value="ENSG00000073849.16"/>
</dbReference>
<dbReference type="Ensembl" id="ENST00000416235.6">
    <molecule id="P15907-1"/>
    <property type="protein sequence ID" value="ENSP00000414504.2"/>
    <property type="gene ID" value="ENSG00000073849.16"/>
</dbReference>
<dbReference type="Ensembl" id="ENST00000448044.5">
    <molecule id="P15907-1"/>
    <property type="protein sequence ID" value="ENSP00000389337.1"/>
    <property type="gene ID" value="ENSG00000073849.16"/>
</dbReference>
<dbReference type="Ensembl" id="ENST00000457772.6">
    <molecule id="P15907-2"/>
    <property type="protein sequence ID" value="ENSP00000412221.2"/>
    <property type="gene ID" value="ENSG00000073849.16"/>
</dbReference>
<dbReference type="Ensembl" id="ENST00000676633.1">
    <molecule id="P15907-1"/>
    <property type="protein sequence ID" value="ENSP00000504448.1"/>
    <property type="gene ID" value="ENSG00000073849.16"/>
</dbReference>
<dbReference type="Ensembl" id="ENST00000677292.1">
    <molecule id="P15907-1"/>
    <property type="protein sequence ID" value="ENSP00000503457.1"/>
    <property type="gene ID" value="ENSG00000073849.16"/>
</dbReference>
<dbReference type="GeneID" id="6480"/>
<dbReference type="KEGG" id="hsa:6480"/>
<dbReference type="MANE-Select" id="ENST00000169298.8">
    <property type="protein sequence ID" value="ENSP00000169298.3"/>
    <property type="RefSeq nucleotide sequence ID" value="NM_173216.2"/>
    <property type="RefSeq protein sequence ID" value="NP_775323.1"/>
</dbReference>
<dbReference type="UCSC" id="uc003frb.4">
    <molecule id="P15907-1"/>
    <property type="organism name" value="human"/>
</dbReference>
<dbReference type="AGR" id="HGNC:10860"/>
<dbReference type="CTD" id="6480"/>
<dbReference type="DisGeNET" id="6480"/>
<dbReference type="GeneCards" id="ST6GAL1"/>
<dbReference type="HGNC" id="HGNC:10860">
    <property type="gene designation" value="ST6GAL1"/>
</dbReference>
<dbReference type="HPA" id="ENSG00000073849">
    <property type="expression patterns" value="Group enriched (liver, lymphoid tissue)"/>
</dbReference>
<dbReference type="MIM" id="109675">
    <property type="type" value="gene"/>
</dbReference>
<dbReference type="neXtProt" id="NX_P15907"/>
<dbReference type="OpenTargets" id="ENSG00000073849"/>
<dbReference type="PharmGKB" id="PA35762"/>
<dbReference type="VEuPathDB" id="HostDB:ENSG00000073849"/>
<dbReference type="eggNOG" id="KOG2692">
    <property type="taxonomic scope" value="Eukaryota"/>
</dbReference>
<dbReference type="GeneTree" id="ENSGT00940000157053"/>
<dbReference type="HOGENOM" id="CLU_038334_0_0_1"/>
<dbReference type="InParanoid" id="P15907"/>
<dbReference type="OMA" id="THPEQPF"/>
<dbReference type="OrthoDB" id="10264956at2759"/>
<dbReference type="PAN-GO" id="P15907">
    <property type="GO annotations" value="4 GO annotations based on evolutionary models"/>
</dbReference>
<dbReference type="PhylomeDB" id="P15907"/>
<dbReference type="TreeFam" id="TF323961"/>
<dbReference type="BioCyc" id="MetaCyc:HS01118-MONOMER"/>
<dbReference type="BRENDA" id="2.4.99.1">
    <property type="organism ID" value="2681"/>
</dbReference>
<dbReference type="PathwayCommons" id="P15907"/>
<dbReference type="Reactome" id="R-HSA-4085001">
    <property type="pathway name" value="Sialic acid metabolism"/>
</dbReference>
<dbReference type="Reactome" id="R-HSA-9683673">
    <property type="pathway name" value="Maturation of protein 3a"/>
</dbReference>
<dbReference type="Reactome" id="R-HSA-9694548">
    <property type="pathway name" value="Maturation of spike protein"/>
</dbReference>
<dbReference type="Reactome" id="R-HSA-9694719">
    <property type="pathway name" value="Maturation of protein 3a"/>
</dbReference>
<dbReference type="Reactome" id="R-HSA-975577">
    <property type="pathway name" value="N-Glycan antennae elongation"/>
</dbReference>
<dbReference type="Reactome" id="R-HSA-977068">
    <property type="pathway name" value="Termination of O-glycan biosynthesis"/>
</dbReference>
<dbReference type="SABIO-RK" id="P15907"/>
<dbReference type="SignaLink" id="P15907"/>
<dbReference type="SIGNOR" id="P15907"/>
<dbReference type="UniPathway" id="UPA00378"/>
<dbReference type="BioGRID-ORCS" id="6480">
    <property type="hits" value="16 hits in 1164 CRISPR screens"/>
</dbReference>
<dbReference type="ChiTaRS" id="ST6GAL1">
    <property type="organism name" value="human"/>
</dbReference>
<dbReference type="EvolutionaryTrace" id="P15907"/>
<dbReference type="GeneWiki" id="ST6GAL1"/>
<dbReference type="GenomeRNAi" id="6480"/>
<dbReference type="Pharos" id="P15907">
    <property type="development level" value="Tchem"/>
</dbReference>
<dbReference type="PRO" id="PR:P15907"/>
<dbReference type="Proteomes" id="UP000005640">
    <property type="component" value="Chromosome 3"/>
</dbReference>
<dbReference type="RNAct" id="P15907">
    <property type="molecule type" value="protein"/>
</dbReference>
<dbReference type="Bgee" id="ENSG00000073849">
    <property type="expression patterns" value="Expressed in liver and 208 other cell types or tissues"/>
</dbReference>
<dbReference type="ExpressionAtlas" id="P15907">
    <property type="expression patterns" value="baseline and differential"/>
</dbReference>
<dbReference type="GO" id="GO:0005576">
    <property type="term" value="C:extracellular region"/>
    <property type="evidence" value="ECO:0007669"/>
    <property type="project" value="UniProtKB-SubCell"/>
</dbReference>
<dbReference type="GO" id="GO:0005794">
    <property type="term" value="C:Golgi apparatus"/>
    <property type="evidence" value="ECO:0000318"/>
    <property type="project" value="GO_Central"/>
</dbReference>
<dbReference type="GO" id="GO:0032580">
    <property type="term" value="C:Golgi cisterna membrane"/>
    <property type="evidence" value="ECO:0007669"/>
    <property type="project" value="UniProtKB-SubCell"/>
</dbReference>
<dbReference type="GO" id="GO:0000139">
    <property type="term" value="C:Golgi membrane"/>
    <property type="evidence" value="ECO:0000314"/>
    <property type="project" value="UniProtKB"/>
</dbReference>
<dbReference type="GO" id="GO:0003835">
    <property type="term" value="F:beta-galactoside alpha-2,6-sialyltransferase activity"/>
    <property type="evidence" value="ECO:0000314"/>
    <property type="project" value="UniProtKB"/>
</dbReference>
<dbReference type="GO" id="GO:0042803">
    <property type="term" value="F:protein homodimerization activity"/>
    <property type="evidence" value="ECO:0000314"/>
    <property type="project" value="UniProtKB"/>
</dbReference>
<dbReference type="GO" id="GO:0008373">
    <property type="term" value="F:sialyltransferase activity"/>
    <property type="evidence" value="ECO:0000314"/>
    <property type="project" value="UniProtKB"/>
</dbReference>
<dbReference type="GO" id="GO:0006054">
    <property type="term" value="P:N-acetylneuraminate metabolic process"/>
    <property type="evidence" value="ECO:0000314"/>
    <property type="project" value="UniProtKB"/>
</dbReference>
<dbReference type="GO" id="GO:0016266">
    <property type="term" value="P:O-glycan processing"/>
    <property type="evidence" value="ECO:0000304"/>
    <property type="project" value="Reactome"/>
</dbReference>
<dbReference type="GO" id="GO:0018279">
    <property type="term" value="P:protein N-linked glycosylation via asparagine"/>
    <property type="evidence" value="ECO:0000314"/>
    <property type="project" value="UniProtKB"/>
</dbReference>
<dbReference type="GO" id="GO:0097503">
    <property type="term" value="P:sialylation"/>
    <property type="evidence" value="ECO:0000314"/>
    <property type="project" value="UniProtKB"/>
</dbReference>
<dbReference type="GO" id="GO:0019082">
    <property type="term" value="P:viral protein processing"/>
    <property type="evidence" value="ECO:0000304"/>
    <property type="project" value="Reactome"/>
</dbReference>
<dbReference type="CDD" id="cd23985">
    <property type="entry name" value="GT29_ST6GAL1"/>
    <property type="match status" value="1"/>
</dbReference>
<dbReference type="FunFam" id="3.90.1480.20:FF:000012">
    <property type="entry name" value="ST6 beta-galactoside alpha-2,6-sialyltransferase 1"/>
    <property type="match status" value="1"/>
</dbReference>
<dbReference type="Gene3D" id="3.90.1480.20">
    <property type="entry name" value="Glycosyl transferase family 29"/>
    <property type="match status" value="1"/>
</dbReference>
<dbReference type="InterPro" id="IPR001675">
    <property type="entry name" value="Glyco_trans_29"/>
</dbReference>
<dbReference type="InterPro" id="IPR038578">
    <property type="entry name" value="GT29-like_sf"/>
</dbReference>
<dbReference type="InterPro" id="IPR012163">
    <property type="entry name" value="Sialyl_trans"/>
</dbReference>
<dbReference type="PANTHER" id="PTHR46059">
    <property type="entry name" value="BETA-GALACTOSIDE ALPHA-2,6-SIALYLTRANSFERASE"/>
    <property type="match status" value="1"/>
</dbReference>
<dbReference type="PANTHER" id="PTHR46059:SF2">
    <property type="entry name" value="BETA-GALACTOSIDE ALPHA-2,6-SIALYLTRANSFERASE 1"/>
    <property type="match status" value="1"/>
</dbReference>
<dbReference type="Pfam" id="PF00777">
    <property type="entry name" value="Glyco_transf_29"/>
    <property type="match status" value="1"/>
</dbReference>
<dbReference type="PIRSF" id="PIRSF005557">
    <property type="entry name" value="Sialyl_trans"/>
    <property type="match status" value="1"/>
</dbReference>
<evidence type="ECO:0000250" key="1">
    <source>
        <dbReference type="UniProtKB" id="P13721"/>
    </source>
</evidence>
<evidence type="ECO:0000255" key="2"/>
<evidence type="ECO:0000269" key="3">
    <source>
    </source>
</evidence>
<evidence type="ECO:0000269" key="4">
    <source>
    </source>
</evidence>
<evidence type="ECO:0000269" key="5">
    <source>
    </source>
</evidence>
<evidence type="ECO:0000269" key="6">
    <source>
    </source>
</evidence>
<evidence type="ECO:0000269" key="7">
    <source>
    </source>
</evidence>
<evidence type="ECO:0000269" key="8">
    <source>
    </source>
</evidence>
<evidence type="ECO:0000269" key="9">
    <source>
    </source>
</evidence>
<evidence type="ECO:0000269" key="10">
    <source>
    </source>
</evidence>
<evidence type="ECO:0000303" key="11">
    <source>
    </source>
</evidence>
<evidence type="ECO:0000305" key="12"/>
<evidence type="ECO:0007744" key="13">
    <source>
        <dbReference type="PDB" id="4JS1"/>
    </source>
</evidence>
<evidence type="ECO:0007744" key="14">
    <source>
        <dbReference type="PDB" id="4JS2"/>
    </source>
</evidence>
<evidence type="ECO:0007744" key="15">
    <source>
    </source>
</evidence>
<evidence type="ECO:0007829" key="16">
    <source>
        <dbReference type="PDB" id="4JS1"/>
    </source>
</evidence>
<evidence type="ECO:0007829" key="17">
    <source>
        <dbReference type="PDB" id="6QVS"/>
    </source>
</evidence>
<organism>
    <name type="scientific">Homo sapiens</name>
    <name type="common">Human</name>
    <dbReference type="NCBI Taxonomy" id="9606"/>
    <lineage>
        <taxon>Eukaryota</taxon>
        <taxon>Metazoa</taxon>
        <taxon>Chordata</taxon>
        <taxon>Craniata</taxon>
        <taxon>Vertebrata</taxon>
        <taxon>Euteleostomi</taxon>
        <taxon>Mammalia</taxon>
        <taxon>Eutheria</taxon>
        <taxon>Euarchontoglires</taxon>
        <taxon>Primates</taxon>
        <taxon>Haplorrhini</taxon>
        <taxon>Catarrhini</taxon>
        <taxon>Hominidae</taxon>
        <taxon>Homo</taxon>
    </lineage>
</organism>
<proteinExistence type="evidence at protein level"/>
<gene>
    <name type="primary">ST6GAL1</name>
    <name type="synonym">SIAT1</name>
</gene>
<name>SIAT1_HUMAN</name>
<sequence>MIHTNLKKKFSCCVLVFLLFAVICVWKEKKKGSYYDSFKLQTKEFQVLKSLGKLAMGSDSQSVSSSSTQDPHRGRQTLGSLRGLAKAKPEASFQVWNKDSSSKNLIPRLQKIWKNYLSMNKYKVSYKGPGPGIKFSAEALRCHLRDHVNVSMVEVTDFPFNTSEWEGYLPKESIRTKAGPWGRCAVVSSAGSLKSSQLGREIDDHDAVLRFNGAPTANFQQDVGTKTTIRLMNSQLVTTEKRFLKDSLYNEGILIVWDPSVYHSDIPKWYQNPDYNFFNNYKTYRKLHPNQPFYILKPQMPWELWDILQEISPEEIQPNPPSSGMLGIIIMMTLCDQVDIYEFLPSKRKTDVCYYYQKFFDSACTMGAYHPLLYEKNLVKHLNQGTDEDIYLLGKATLPGFRTIHC</sequence>
<comment type="function">
    <text evidence="4 7 9">Transfers sialic acid from CMP-sialic acid to galactose-containing acceptor substrates. In B lymphocytes, generates neuraminidase-sensitive lymphocyte cell-surface differentiation antigens, such as CDw75, HB-6 and CD76 (PubMed:1730763).</text>
</comment>
<comment type="catalytic activity">
    <reaction evidence="7 9">
        <text>a beta-D-galactoside + CMP-N-acetyl-beta-neuraminate = an N-acetyl-alpha-neuraminyl-(2-&gt;6)-beta-D-galactosyl derivative + CMP + H(+)</text>
        <dbReference type="Rhea" id="RHEA:52104"/>
        <dbReference type="ChEBI" id="CHEBI:15378"/>
        <dbReference type="ChEBI" id="CHEBI:28034"/>
        <dbReference type="ChEBI" id="CHEBI:57812"/>
        <dbReference type="ChEBI" id="CHEBI:60377"/>
        <dbReference type="ChEBI" id="CHEBI:136398"/>
        <dbReference type="EC" id="2.4.3.1"/>
    </reaction>
</comment>
<comment type="activity regulation">
    <text evidence="9">Inhibited by CTP.</text>
</comment>
<comment type="biophysicochemical properties">
    <kinetics>
        <KM evidence="7">530 uM for CMP-NeuAc</KM>
        <Vmax evidence="7">1.074 pmol/min/ug enzyme</Vmax>
    </kinetics>
</comment>
<comment type="pathway">
    <text>Protein modification; protein glycosylation.</text>
</comment>
<comment type="subunit">
    <text evidence="6">Monomer and homodimer.</text>
</comment>
<comment type="subcellular location">
    <subcellularLocation>
        <location evidence="4 6">Golgi apparatus</location>
        <location evidence="4 6">Golgi stack membrane</location>
        <topology evidence="12">Single-pass type II membrane protein</topology>
    </subcellularLocation>
    <subcellularLocation>
        <location evidence="1">Secreted</location>
    </subcellularLocation>
    <text evidence="1 6">Membrane-bound form in trans cisternae of Golgi (PubMed:20378551). Secreted into the body fluid (By similarity).</text>
</comment>
<comment type="alternative products">
    <event type="alternative splicing"/>
    <isoform>
        <id>P15907-1</id>
        <name>1</name>
        <sequence type="displayed"/>
    </isoform>
    <isoform>
        <id>P15907-2</id>
        <name>2</name>
        <sequence type="described" ref="VSP_056076"/>
    </isoform>
</comment>
<comment type="PTM">
    <text evidence="9">N-glycosylated.</text>
</comment>
<comment type="similarity">
    <text evidence="12">Belongs to the glycosyltransferase 29 family.</text>
</comment>
<comment type="caution">
    <text evidence="3 4 8 10">ST6GAL1 has been mistakenly referred to as B-cell antigen CD75 or CDw75 but CD75 is a carbohydrate epitope on glycoproteins or glycolipids product of ST6GAL1 enzymatic activity (PubMed:1730763, PubMed:2373995). ST6GAL1 generates CD75 by catalyzing the addition of sialic acid in alpha2,6 linkage to galactose residues (PubMed:1547499, PubMed:1730763, PubMed:35789385).</text>
</comment>
<comment type="online information" name="Functional Glycomics Gateway - GTase">
    <link uri="http://www.functionalglycomics.org/glycomics/molecule/jsp/glycoEnzyme/viewGlycoEnzyme.jsp?gbpId=gt_hum_628"/>
    <text>ST6Gal I</text>
</comment>
<protein>
    <recommendedName>
        <fullName>Beta-galactoside alpha-2,6-sialyltransferase 1</fullName>
        <shortName>Alpha 2,6-ST 1</shortName>
        <ecNumber evidence="7 9">2.4.3.1</ecNumber>
    </recommendedName>
    <alternativeName>
        <fullName>CMP-N-acetylneuraminate-beta-galactosamide-alpha-2,6-sialyltransferase 1</fullName>
    </alternativeName>
    <alternativeName>
        <fullName>ST6Gal I</fullName>
        <shortName>ST6GalI</shortName>
    </alternativeName>
    <alternativeName>
        <fullName>Sialyltransferase 1</fullName>
    </alternativeName>
</protein>